<reference key="1">
    <citation type="journal article" date="2008" name="Environ. Microbiol.">
        <title>The genome of Erwinia tasmaniensis strain Et1/99, a non-pathogenic bacterium in the genus Erwinia.</title>
        <authorList>
            <person name="Kube M."/>
            <person name="Migdoll A.M."/>
            <person name="Mueller I."/>
            <person name="Kuhl H."/>
            <person name="Beck A."/>
            <person name="Reinhardt R."/>
            <person name="Geider K."/>
        </authorList>
    </citation>
    <scope>NUCLEOTIDE SEQUENCE [LARGE SCALE GENOMIC DNA]</scope>
    <source>
        <strain>DSM 17950 / CFBP 7177 / CIP 109463 / NCPPB 4357 / Et1/99</strain>
    </source>
</reference>
<feature type="chain" id="PRO_1000137032" description="Protein Syd">
    <location>
        <begin position="1"/>
        <end position="186"/>
    </location>
</feature>
<proteinExistence type="inferred from homology"/>
<comment type="function">
    <text evidence="1">Interacts with the SecY protein in vivo. May bind preferentially to an uncomplexed state of SecY, thus functioning either as a chelating agent for excess SecY in the cell or as a regulatory factor that negatively controls the translocase function.</text>
</comment>
<comment type="subcellular location">
    <subcellularLocation>
        <location evidence="1">Cell inner membrane</location>
        <topology evidence="1">Peripheral membrane protein</topology>
        <orientation evidence="1">Cytoplasmic side</orientation>
    </subcellularLocation>
    <text evidence="1">Loosely associated with the cytoplasmic side of the inner membrane, probably via SecY.</text>
</comment>
<comment type="similarity">
    <text evidence="1">Belongs to the Syd family.</text>
</comment>
<keyword id="KW-0997">Cell inner membrane</keyword>
<keyword id="KW-1003">Cell membrane</keyword>
<keyword id="KW-0472">Membrane</keyword>
<keyword id="KW-1185">Reference proteome</keyword>
<evidence type="ECO:0000255" key="1">
    <source>
        <dbReference type="HAMAP-Rule" id="MF_01104"/>
    </source>
</evidence>
<dbReference type="EMBL" id="CU468135">
    <property type="protein sequence ID" value="CAO97776.1"/>
    <property type="molecule type" value="Genomic_DNA"/>
</dbReference>
<dbReference type="RefSeq" id="WP_012442433.1">
    <property type="nucleotide sequence ID" value="NC_010694.1"/>
</dbReference>
<dbReference type="SMR" id="B2VFX0"/>
<dbReference type="STRING" id="465817.ETA_27300"/>
<dbReference type="KEGG" id="eta:ETA_27300"/>
<dbReference type="eggNOG" id="ENOG502ZCMR">
    <property type="taxonomic scope" value="Bacteria"/>
</dbReference>
<dbReference type="HOGENOM" id="CLU_121866_0_0_6"/>
<dbReference type="OrthoDB" id="5599437at2"/>
<dbReference type="Proteomes" id="UP000001726">
    <property type="component" value="Chromosome"/>
</dbReference>
<dbReference type="GO" id="GO:0009898">
    <property type="term" value="C:cytoplasmic side of plasma membrane"/>
    <property type="evidence" value="ECO:0007669"/>
    <property type="project" value="InterPro"/>
</dbReference>
<dbReference type="CDD" id="cd16323">
    <property type="entry name" value="Syd"/>
    <property type="match status" value="1"/>
</dbReference>
<dbReference type="Gene3D" id="3.40.1580.20">
    <property type="entry name" value="Syd protein"/>
    <property type="match status" value="1"/>
</dbReference>
<dbReference type="HAMAP" id="MF_01104">
    <property type="entry name" value="Syd"/>
    <property type="match status" value="1"/>
</dbReference>
<dbReference type="InterPro" id="IPR009948">
    <property type="entry name" value="Syd"/>
</dbReference>
<dbReference type="InterPro" id="IPR038228">
    <property type="entry name" value="Syd_sf"/>
</dbReference>
<dbReference type="NCBIfam" id="NF003439">
    <property type="entry name" value="PRK04968.1"/>
    <property type="match status" value="1"/>
</dbReference>
<dbReference type="Pfam" id="PF07348">
    <property type="entry name" value="Syd"/>
    <property type="match status" value="1"/>
</dbReference>
<accession>B2VFX0</accession>
<organism>
    <name type="scientific">Erwinia tasmaniensis (strain DSM 17950 / CFBP 7177 / CIP 109463 / NCPPB 4357 / Et1/99)</name>
    <dbReference type="NCBI Taxonomy" id="465817"/>
    <lineage>
        <taxon>Bacteria</taxon>
        <taxon>Pseudomonadati</taxon>
        <taxon>Pseudomonadota</taxon>
        <taxon>Gammaproteobacteria</taxon>
        <taxon>Enterobacterales</taxon>
        <taxon>Erwiniaceae</taxon>
        <taxon>Erwinia</taxon>
    </lineage>
</organism>
<name>SYDP_ERWT9</name>
<gene>
    <name evidence="1" type="primary">syd</name>
    <name type="ordered locus">ETA_27300</name>
</gene>
<sequence length="186" mass="20865">MIDETSQALRDFSQRYCDLWQQKSGHAPASQELYGIPSPCVMATDEDEVWWQPRPFTLAPNLDAVERALDIRLQPAVTAFYTSQFAGDMTGTLDGRPLSLVQVWSEDDFIRVQENLIGHLVMKRRLKQSPTLFIATTDSELEVISVCNVSGEVILEQLGTKKRQVIASSIENLLIALQPLIINCSN</sequence>
<protein>
    <recommendedName>
        <fullName evidence="1">Protein Syd</fullName>
    </recommendedName>
</protein>